<sequence>MGQTITEKIFSEHAGKKVYAGEIVRSPIDMVIGNDITTPISIRAFEEGGFEKLANPDGFAIVLDHFIPAKDIASANQAKISRDFALKHNLKNFFDEKDMGIEHALLPEKGLVIPGDVIIGADSHTCTHGALGAFSTGMGSTDISFGMITGGNWFKVPESIKVIFKGKPAPFVTGKDLILEIIRILGVDGALYKALEFTGDTIQYLSMDDRFSLCNMAIEAGAKNGIVAYDEITKEFLDKVGEANGGLRAEPKIHYSDEDANYCQVIEIDVAKLEPVIAYPYLPSNGHSVSQAVSDNIKVDQVFIGSCTNGRLSDFKIAAEILAGQKVARHVRLILTPGTQKILREATKLGYIDTLVDAGAVVSNPTCGACLGGYMGILGDNEVCISTTNRNFVGRMGSRSSKIYLANSAVAAASAISGYITDPRSL</sequence>
<gene>
    <name evidence="1" type="primary">leuC</name>
    <name type="ordered locus">Abu_0079</name>
</gene>
<keyword id="KW-0004">4Fe-4S</keyword>
<keyword id="KW-0028">Amino-acid biosynthesis</keyword>
<keyword id="KW-0100">Branched-chain amino acid biosynthesis</keyword>
<keyword id="KW-0408">Iron</keyword>
<keyword id="KW-0411">Iron-sulfur</keyword>
<keyword id="KW-0432">Leucine biosynthesis</keyword>
<keyword id="KW-0456">Lyase</keyword>
<keyword id="KW-0479">Metal-binding</keyword>
<keyword id="KW-1185">Reference proteome</keyword>
<name>LEUC_ALIB4</name>
<accession>A8EQZ0</accession>
<proteinExistence type="inferred from homology"/>
<dbReference type="EC" id="4.2.1.33" evidence="1"/>
<dbReference type="EMBL" id="CP000361">
    <property type="protein sequence ID" value="ABV66364.1"/>
    <property type="molecule type" value="Genomic_DNA"/>
</dbReference>
<dbReference type="RefSeq" id="WP_012011984.1">
    <property type="nucleotide sequence ID" value="NC_009850.1"/>
</dbReference>
<dbReference type="SMR" id="A8EQZ0"/>
<dbReference type="STRING" id="367737.Abu_0079"/>
<dbReference type="GeneID" id="24304347"/>
<dbReference type="KEGG" id="abu:Abu_0079"/>
<dbReference type="eggNOG" id="COG0065">
    <property type="taxonomic scope" value="Bacteria"/>
</dbReference>
<dbReference type="HOGENOM" id="CLU_006714_3_4_7"/>
<dbReference type="UniPathway" id="UPA00048">
    <property type="reaction ID" value="UER00071"/>
</dbReference>
<dbReference type="Proteomes" id="UP000001136">
    <property type="component" value="Chromosome"/>
</dbReference>
<dbReference type="GO" id="GO:0003861">
    <property type="term" value="F:3-isopropylmalate dehydratase activity"/>
    <property type="evidence" value="ECO:0007669"/>
    <property type="project" value="UniProtKB-UniRule"/>
</dbReference>
<dbReference type="GO" id="GO:0051539">
    <property type="term" value="F:4 iron, 4 sulfur cluster binding"/>
    <property type="evidence" value="ECO:0007669"/>
    <property type="project" value="UniProtKB-KW"/>
</dbReference>
<dbReference type="GO" id="GO:0046872">
    <property type="term" value="F:metal ion binding"/>
    <property type="evidence" value="ECO:0007669"/>
    <property type="project" value="UniProtKB-KW"/>
</dbReference>
<dbReference type="GO" id="GO:0009098">
    <property type="term" value="P:L-leucine biosynthetic process"/>
    <property type="evidence" value="ECO:0007669"/>
    <property type="project" value="UniProtKB-UniRule"/>
</dbReference>
<dbReference type="CDD" id="cd01583">
    <property type="entry name" value="IPMI"/>
    <property type="match status" value="1"/>
</dbReference>
<dbReference type="Gene3D" id="3.30.499.10">
    <property type="entry name" value="Aconitase, domain 3"/>
    <property type="match status" value="2"/>
</dbReference>
<dbReference type="HAMAP" id="MF_01027">
    <property type="entry name" value="LeuC_type2"/>
    <property type="match status" value="1"/>
</dbReference>
<dbReference type="InterPro" id="IPR015931">
    <property type="entry name" value="Acnase/IPM_dHydase_lsu_aba_1/3"/>
</dbReference>
<dbReference type="InterPro" id="IPR001030">
    <property type="entry name" value="Acoase/IPM_deHydtase_lsu_aba"/>
</dbReference>
<dbReference type="InterPro" id="IPR018136">
    <property type="entry name" value="Aconitase_4Fe-4S_BS"/>
</dbReference>
<dbReference type="InterPro" id="IPR036008">
    <property type="entry name" value="Aconitase_4Fe-4S_dom"/>
</dbReference>
<dbReference type="InterPro" id="IPR011826">
    <property type="entry name" value="HAcnase/IPMdehydase_lsu_prok"/>
</dbReference>
<dbReference type="InterPro" id="IPR006251">
    <property type="entry name" value="Homoacnase/IPMdehydase_lsu"/>
</dbReference>
<dbReference type="InterPro" id="IPR050067">
    <property type="entry name" value="IPM_dehydratase_rel_enz"/>
</dbReference>
<dbReference type="InterPro" id="IPR033941">
    <property type="entry name" value="IPMI_cat"/>
</dbReference>
<dbReference type="InterPro" id="IPR011823">
    <property type="entry name" value="IsopropMal_deHydtase_lsu_bac"/>
</dbReference>
<dbReference type="NCBIfam" id="TIGR01343">
    <property type="entry name" value="hacA_fam"/>
    <property type="match status" value="1"/>
</dbReference>
<dbReference type="NCBIfam" id="TIGR02086">
    <property type="entry name" value="IPMI_arch"/>
    <property type="match status" value="1"/>
</dbReference>
<dbReference type="NCBIfam" id="TIGR02083">
    <property type="entry name" value="LEU2"/>
    <property type="match status" value="1"/>
</dbReference>
<dbReference type="NCBIfam" id="NF001614">
    <property type="entry name" value="PRK00402.1"/>
    <property type="match status" value="1"/>
</dbReference>
<dbReference type="PANTHER" id="PTHR43822:SF16">
    <property type="entry name" value="3-ISOPROPYLMALATE DEHYDRATASE LARGE SUBUNIT 2"/>
    <property type="match status" value="1"/>
</dbReference>
<dbReference type="PANTHER" id="PTHR43822">
    <property type="entry name" value="HOMOACONITASE, MITOCHONDRIAL-RELATED"/>
    <property type="match status" value="1"/>
</dbReference>
<dbReference type="Pfam" id="PF00330">
    <property type="entry name" value="Aconitase"/>
    <property type="match status" value="1"/>
</dbReference>
<dbReference type="PRINTS" id="PR00415">
    <property type="entry name" value="ACONITASE"/>
</dbReference>
<dbReference type="SUPFAM" id="SSF53732">
    <property type="entry name" value="Aconitase iron-sulfur domain"/>
    <property type="match status" value="1"/>
</dbReference>
<dbReference type="PROSITE" id="PS01244">
    <property type="entry name" value="ACONITASE_2"/>
    <property type="match status" value="1"/>
</dbReference>
<reference key="1">
    <citation type="journal article" date="2007" name="PLoS ONE">
        <title>The complete genome sequence and analysis of the Epsilonproteobacterium Arcobacter butzleri.</title>
        <authorList>
            <person name="Miller W.G."/>
            <person name="Parker C.T."/>
            <person name="Rubenfield M."/>
            <person name="Mendz G.L."/>
            <person name="Woesten M.M.S.M."/>
            <person name="Ussery D.W."/>
            <person name="Stolz J.F."/>
            <person name="Binnewies T.T."/>
            <person name="Hallin P.F."/>
            <person name="Wang G."/>
            <person name="Malek J.A."/>
            <person name="Rogosin A."/>
            <person name="Stanker L.H."/>
            <person name="Mandrell R.E."/>
        </authorList>
    </citation>
    <scope>NUCLEOTIDE SEQUENCE [LARGE SCALE GENOMIC DNA]</scope>
    <source>
        <strain>RM4018</strain>
    </source>
</reference>
<feature type="chain" id="PRO_1000063638" description="3-isopropylmalate dehydratase large subunit">
    <location>
        <begin position="1"/>
        <end position="426"/>
    </location>
</feature>
<feature type="binding site" evidence="1">
    <location>
        <position position="307"/>
    </location>
    <ligand>
        <name>[4Fe-4S] cluster</name>
        <dbReference type="ChEBI" id="CHEBI:49883"/>
    </ligand>
</feature>
<feature type="binding site" evidence="1">
    <location>
        <position position="367"/>
    </location>
    <ligand>
        <name>[4Fe-4S] cluster</name>
        <dbReference type="ChEBI" id="CHEBI:49883"/>
    </ligand>
</feature>
<feature type="binding site" evidence="1">
    <location>
        <position position="370"/>
    </location>
    <ligand>
        <name>[4Fe-4S] cluster</name>
        <dbReference type="ChEBI" id="CHEBI:49883"/>
    </ligand>
</feature>
<protein>
    <recommendedName>
        <fullName evidence="1">3-isopropylmalate dehydratase large subunit</fullName>
        <ecNumber evidence="1">4.2.1.33</ecNumber>
    </recommendedName>
    <alternativeName>
        <fullName evidence="1">Alpha-IPM isomerase</fullName>
        <shortName evidence="1">IPMI</shortName>
    </alternativeName>
    <alternativeName>
        <fullName evidence="1">Isopropylmalate isomerase</fullName>
    </alternativeName>
</protein>
<organism>
    <name type="scientific">Aliarcobacter butzleri (strain RM4018)</name>
    <name type="common">Arcobacter butzleri</name>
    <dbReference type="NCBI Taxonomy" id="367737"/>
    <lineage>
        <taxon>Bacteria</taxon>
        <taxon>Pseudomonadati</taxon>
        <taxon>Campylobacterota</taxon>
        <taxon>Epsilonproteobacteria</taxon>
        <taxon>Campylobacterales</taxon>
        <taxon>Arcobacteraceae</taxon>
        <taxon>Aliarcobacter</taxon>
    </lineage>
</organism>
<evidence type="ECO:0000255" key="1">
    <source>
        <dbReference type="HAMAP-Rule" id="MF_01027"/>
    </source>
</evidence>
<comment type="function">
    <text evidence="1">Catalyzes the isomerization between 2-isopropylmalate and 3-isopropylmalate, via the formation of 2-isopropylmaleate.</text>
</comment>
<comment type="catalytic activity">
    <reaction evidence="1">
        <text>(2R,3S)-3-isopropylmalate = (2S)-2-isopropylmalate</text>
        <dbReference type="Rhea" id="RHEA:32287"/>
        <dbReference type="ChEBI" id="CHEBI:1178"/>
        <dbReference type="ChEBI" id="CHEBI:35121"/>
        <dbReference type="EC" id="4.2.1.33"/>
    </reaction>
</comment>
<comment type="cofactor">
    <cofactor evidence="1">
        <name>[4Fe-4S] cluster</name>
        <dbReference type="ChEBI" id="CHEBI:49883"/>
    </cofactor>
    <text evidence="1">Binds 1 [4Fe-4S] cluster per subunit.</text>
</comment>
<comment type="pathway">
    <text evidence="1">Amino-acid biosynthesis; L-leucine biosynthesis; L-leucine from 3-methyl-2-oxobutanoate: step 2/4.</text>
</comment>
<comment type="subunit">
    <text evidence="1">Heterodimer of LeuC and LeuD.</text>
</comment>
<comment type="similarity">
    <text evidence="1">Belongs to the aconitase/IPM isomerase family. LeuC type 2 subfamily.</text>
</comment>